<accession>Q03GY3</accession>
<proteinExistence type="inferred from homology"/>
<feature type="chain" id="PRO_1000049532" description="Glycerol-3-phosphate dehydrogenase [NAD(P)+]">
    <location>
        <begin position="1"/>
        <end position="338"/>
    </location>
</feature>
<feature type="active site" description="Proton acceptor" evidence="1">
    <location>
        <position position="196"/>
    </location>
</feature>
<feature type="binding site" evidence="1">
    <location>
        <position position="12"/>
    </location>
    <ligand>
        <name>NADPH</name>
        <dbReference type="ChEBI" id="CHEBI:57783"/>
    </ligand>
</feature>
<feature type="binding site" evidence="1">
    <location>
        <position position="13"/>
    </location>
    <ligand>
        <name>NADPH</name>
        <dbReference type="ChEBI" id="CHEBI:57783"/>
    </ligand>
</feature>
<feature type="binding site" evidence="1">
    <location>
        <position position="110"/>
    </location>
    <ligand>
        <name>NADPH</name>
        <dbReference type="ChEBI" id="CHEBI:57783"/>
    </ligand>
</feature>
<feature type="binding site" evidence="1">
    <location>
        <position position="110"/>
    </location>
    <ligand>
        <name>sn-glycerol 3-phosphate</name>
        <dbReference type="ChEBI" id="CHEBI:57597"/>
    </ligand>
</feature>
<feature type="binding site" evidence="1">
    <location>
        <position position="141"/>
    </location>
    <ligand>
        <name>sn-glycerol 3-phosphate</name>
        <dbReference type="ChEBI" id="CHEBI:57597"/>
    </ligand>
</feature>
<feature type="binding site" evidence="1">
    <location>
        <position position="143"/>
    </location>
    <ligand>
        <name>sn-glycerol 3-phosphate</name>
        <dbReference type="ChEBI" id="CHEBI:57597"/>
    </ligand>
</feature>
<feature type="binding site" evidence="1">
    <location>
        <position position="145"/>
    </location>
    <ligand>
        <name>NADPH</name>
        <dbReference type="ChEBI" id="CHEBI:57783"/>
    </ligand>
</feature>
<feature type="binding site" evidence="1">
    <location>
        <position position="196"/>
    </location>
    <ligand>
        <name>sn-glycerol 3-phosphate</name>
        <dbReference type="ChEBI" id="CHEBI:57597"/>
    </ligand>
</feature>
<feature type="binding site" evidence="1">
    <location>
        <position position="249"/>
    </location>
    <ligand>
        <name>sn-glycerol 3-phosphate</name>
        <dbReference type="ChEBI" id="CHEBI:57597"/>
    </ligand>
</feature>
<feature type="binding site" evidence="1">
    <location>
        <position position="259"/>
    </location>
    <ligand>
        <name>sn-glycerol 3-phosphate</name>
        <dbReference type="ChEBI" id="CHEBI:57597"/>
    </ligand>
</feature>
<feature type="binding site" evidence="1">
    <location>
        <position position="260"/>
    </location>
    <ligand>
        <name>NADPH</name>
        <dbReference type="ChEBI" id="CHEBI:57783"/>
    </ligand>
</feature>
<feature type="binding site" evidence="1">
    <location>
        <position position="260"/>
    </location>
    <ligand>
        <name>sn-glycerol 3-phosphate</name>
        <dbReference type="ChEBI" id="CHEBI:57597"/>
    </ligand>
</feature>
<feature type="binding site" evidence="1">
    <location>
        <position position="261"/>
    </location>
    <ligand>
        <name>sn-glycerol 3-phosphate</name>
        <dbReference type="ChEBI" id="CHEBI:57597"/>
    </ligand>
</feature>
<feature type="binding site" evidence="1">
    <location>
        <position position="284"/>
    </location>
    <ligand>
        <name>NADPH</name>
        <dbReference type="ChEBI" id="CHEBI:57783"/>
    </ligand>
</feature>
<feature type="binding site" evidence="1">
    <location>
        <position position="286"/>
    </location>
    <ligand>
        <name>NADPH</name>
        <dbReference type="ChEBI" id="CHEBI:57783"/>
    </ligand>
</feature>
<reference key="1">
    <citation type="journal article" date="2006" name="Proc. Natl. Acad. Sci. U.S.A.">
        <title>Comparative genomics of the lactic acid bacteria.</title>
        <authorList>
            <person name="Makarova K.S."/>
            <person name="Slesarev A."/>
            <person name="Wolf Y.I."/>
            <person name="Sorokin A."/>
            <person name="Mirkin B."/>
            <person name="Koonin E.V."/>
            <person name="Pavlov A."/>
            <person name="Pavlova N."/>
            <person name="Karamychev V."/>
            <person name="Polouchine N."/>
            <person name="Shakhova V."/>
            <person name="Grigoriev I."/>
            <person name="Lou Y."/>
            <person name="Rohksar D."/>
            <person name="Lucas S."/>
            <person name="Huang K."/>
            <person name="Goodstein D.M."/>
            <person name="Hawkins T."/>
            <person name="Plengvidhya V."/>
            <person name="Welker D."/>
            <person name="Hughes J."/>
            <person name="Goh Y."/>
            <person name="Benson A."/>
            <person name="Baldwin K."/>
            <person name="Lee J.-H."/>
            <person name="Diaz-Muniz I."/>
            <person name="Dosti B."/>
            <person name="Smeianov V."/>
            <person name="Wechter W."/>
            <person name="Barabote R."/>
            <person name="Lorca G."/>
            <person name="Altermann E."/>
            <person name="Barrangou R."/>
            <person name="Ganesan B."/>
            <person name="Xie Y."/>
            <person name="Rawsthorne H."/>
            <person name="Tamir D."/>
            <person name="Parker C."/>
            <person name="Breidt F."/>
            <person name="Broadbent J.R."/>
            <person name="Hutkins R."/>
            <person name="O'Sullivan D."/>
            <person name="Steele J."/>
            <person name="Unlu G."/>
            <person name="Saier M.H. Jr."/>
            <person name="Klaenhammer T."/>
            <person name="Richardson P."/>
            <person name="Kozyavkin S."/>
            <person name="Weimer B.C."/>
            <person name="Mills D.A."/>
        </authorList>
    </citation>
    <scope>NUCLEOTIDE SEQUENCE [LARGE SCALE GENOMIC DNA]</scope>
    <source>
        <strain>ATCC 25745 / CCUG 21536 / LMG 10740 / 183-1w</strain>
    </source>
</reference>
<name>GPDA_PEDPA</name>
<sequence length="338" mass="36493">MVKKVAVLGAGSWGSILANMLVQNGNDVVAWTNMEEQAKELNEQHSNEHYVPGFKYDERLVATTDLEVALKDVDAVLFVVPTKVMRLVAQQMVEVLKKTGQKPIIVHASKGLELGTHKRLSEVLAEEIPSELRQAIVVLSGPSHAEEVAKQDLTLVTAASSDLASAEAVQKLFMNNYFRVYTNDDIVGVEMGAALKNVIAIGAGALHGLGYGDDAKAALITRGLAEISRLGVAFGANPLTFIGLSGVGDLIVTATSVHSRNWRAGNELGQGMKLDEVIDTMGMVIEGVPSTKAAYELAQQKNIEMPITEAIYDVLYNEKGVKEAIDELMHRDGRSELE</sequence>
<organism>
    <name type="scientific">Pediococcus pentosaceus (strain ATCC 25745 / CCUG 21536 / LMG 10740 / 183-1w)</name>
    <dbReference type="NCBI Taxonomy" id="278197"/>
    <lineage>
        <taxon>Bacteria</taxon>
        <taxon>Bacillati</taxon>
        <taxon>Bacillota</taxon>
        <taxon>Bacilli</taxon>
        <taxon>Lactobacillales</taxon>
        <taxon>Lactobacillaceae</taxon>
        <taxon>Pediococcus</taxon>
    </lineage>
</organism>
<gene>
    <name evidence="1" type="primary">gpsA</name>
    <name type="ordered locus">PEPE_0443</name>
</gene>
<evidence type="ECO:0000255" key="1">
    <source>
        <dbReference type="HAMAP-Rule" id="MF_00394"/>
    </source>
</evidence>
<dbReference type="EC" id="1.1.1.94" evidence="1"/>
<dbReference type="EMBL" id="CP000422">
    <property type="protein sequence ID" value="ABJ67539.1"/>
    <property type="molecule type" value="Genomic_DNA"/>
</dbReference>
<dbReference type="RefSeq" id="WP_002834087.1">
    <property type="nucleotide sequence ID" value="NC_008525.1"/>
</dbReference>
<dbReference type="SMR" id="Q03GY3"/>
<dbReference type="STRING" id="278197.PEPE_0443"/>
<dbReference type="GeneID" id="33062065"/>
<dbReference type="KEGG" id="ppe:PEPE_0443"/>
<dbReference type="eggNOG" id="COG0240">
    <property type="taxonomic scope" value="Bacteria"/>
</dbReference>
<dbReference type="HOGENOM" id="CLU_033449_0_2_9"/>
<dbReference type="OrthoDB" id="9812273at2"/>
<dbReference type="UniPathway" id="UPA00940"/>
<dbReference type="Proteomes" id="UP000000773">
    <property type="component" value="Chromosome"/>
</dbReference>
<dbReference type="GO" id="GO:0005829">
    <property type="term" value="C:cytosol"/>
    <property type="evidence" value="ECO:0007669"/>
    <property type="project" value="TreeGrafter"/>
</dbReference>
<dbReference type="GO" id="GO:0047952">
    <property type="term" value="F:glycerol-3-phosphate dehydrogenase [NAD(P)+] activity"/>
    <property type="evidence" value="ECO:0007669"/>
    <property type="project" value="UniProtKB-UniRule"/>
</dbReference>
<dbReference type="GO" id="GO:0051287">
    <property type="term" value="F:NAD binding"/>
    <property type="evidence" value="ECO:0007669"/>
    <property type="project" value="InterPro"/>
</dbReference>
<dbReference type="GO" id="GO:0005975">
    <property type="term" value="P:carbohydrate metabolic process"/>
    <property type="evidence" value="ECO:0007669"/>
    <property type="project" value="InterPro"/>
</dbReference>
<dbReference type="GO" id="GO:0046167">
    <property type="term" value="P:glycerol-3-phosphate biosynthetic process"/>
    <property type="evidence" value="ECO:0007669"/>
    <property type="project" value="UniProtKB-UniRule"/>
</dbReference>
<dbReference type="GO" id="GO:0046168">
    <property type="term" value="P:glycerol-3-phosphate catabolic process"/>
    <property type="evidence" value="ECO:0007669"/>
    <property type="project" value="InterPro"/>
</dbReference>
<dbReference type="GO" id="GO:0006650">
    <property type="term" value="P:glycerophospholipid metabolic process"/>
    <property type="evidence" value="ECO:0007669"/>
    <property type="project" value="UniProtKB-UniRule"/>
</dbReference>
<dbReference type="GO" id="GO:0008654">
    <property type="term" value="P:phospholipid biosynthetic process"/>
    <property type="evidence" value="ECO:0007669"/>
    <property type="project" value="UniProtKB-KW"/>
</dbReference>
<dbReference type="FunFam" id="1.10.1040.10:FF:000001">
    <property type="entry name" value="Glycerol-3-phosphate dehydrogenase [NAD(P)+]"/>
    <property type="match status" value="1"/>
</dbReference>
<dbReference type="FunFam" id="3.40.50.720:FF:000019">
    <property type="entry name" value="Glycerol-3-phosphate dehydrogenase [NAD(P)+]"/>
    <property type="match status" value="1"/>
</dbReference>
<dbReference type="Gene3D" id="1.10.1040.10">
    <property type="entry name" value="N-(1-d-carboxylethyl)-l-norvaline Dehydrogenase, domain 2"/>
    <property type="match status" value="1"/>
</dbReference>
<dbReference type="Gene3D" id="3.40.50.720">
    <property type="entry name" value="NAD(P)-binding Rossmann-like Domain"/>
    <property type="match status" value="1"/>
</dbReference>
<dbReference type="HAMAP" id="MF_00394">
    <property type="entry name" value="NAD_Glyc3P_dehydrog"/>
    <property type="match status" value="1"/>
</dbReference>
<dbReference type="InterPro" id="IPR008927">
    <property type="entry name" value="6-PGluconate_DH-like_C_sf"/>
</dbReference>
<dbReference type="InterPro" id="IPR013328">
    <property type="entry name" value="6PGD_dom2"/>
</dbReference>
<dbReference type="InterPro" id="IPR006168">
    <property type="entry name" value="G3P_DH_NAD-dep"/>
</dbReference>
<dbReference type="InterPro" id="IPR006109">
    <property type="entry name" value="G3P_DH_NAD-dep_C"/>
</dbReference>
<dbReference type="InterPro" id="IPR011128">
    <property type="entry name" value="G3P_DH_NAD-dep_N"/>
</dbReference>
<dbReference type="InterPro" id="IPR036291">
    <property type="entry name" value="NAD(P)-bd_dom_sf"/>
</dbReference>
<dbReference type="NCBIfam" id="NF000940">
    <property type="entry name" value="PRK00094.1-2"/>
    <property type="match status" value="1"/>
</dbReference>
<dbReference type="NCBIfam" id="NF000941">
    <property type="entry name" value="PRK00094.1-3"/>
    <property type="match status" value="1"/>
</dbReference>
<dbReference type="NCBIfam" id="NF000942">
    <property type="entry name" value="PRK00094.1-4"/>
    <property type="match status" value="1"/>
</dbReference>
<dbReference type="PANTHER" id="PTHR11728">
    <property type="entry name" value="GLYCEROL-3-PHOSPHATE DEHYDROGENASE"/>
    <property type="match status" value="1"/>
</dbReference>
<dbReference type="PANTHER" id="PTHR11728:SF1">
    <property type="entry name" value="GLYCEROL-3-PHOSPHATE DEHYDROGENASE [NAD(+)] 2, CHLOROPLASTIC"/>
    <property type="match status" value="1"/>
</dbReference>
<dbReference type="Pfam" id="PF07479">
    <property type="entry name" value="NAD_Gly3P_dh_C"/>
    <property type="match status" value="1"/>
</dbReference>
<dbReference type="Pfam" id="PF01210">
    <property type="entry name" value="NAD_Gly3P_dh_N"/>
    <property type="match status" value="1"/>
</dbReference>
<dbReference type="PIRSF" id="PIRSF000114">
    <property type="entry name" value="Glycerol-3-P_dh"/>
    <property type="match status" value="1"/>
</dbReference>
<dbReference type="PRINTS" id="PR00077">
    <property type="entry name" value="GPDHDRGNASE"/>
</dbReference>
<dbReference type="SUPFAM" id="SSF48179">
    <property type="entry name" value="6-phosphogluconate dehydrogenase C-terminal domain-like"/>
    <property type="match status" value="1"/>
</dbReference>
<dbReference type="SUPFAM" id="SSF51735">
    <property type="entry name" value="NAD(P)-binding Rossmann-fold domains"/>
    <property type="match status" value="1"/>
</dbReference>
<dbReference type="PROSITE" id="PS00957">
    <property type="entry name" value="NAD_G3PDH"/>
    <property type="match status" value="1"/>
</dbReference>
<comment type="function">
    <text evidence="1">Catalyzes the reduction of the glycolytic intermediate dihydroxyacetone phosphate (DHAP) to sn-glycerol 3-phosphate (G3P), the key precursor for phospholipid synthesis.</text>
</comment>
<comment type="catalytic activity">
    <reaction evidence="1">
        <text>sn-glycerol 3-phosphate + NAD(+) = dihydroxyacetone phosphate + NADH + H(+)</text>
        <dbReference type="Rhea" id="RHEA:11092"/>
        <dbReference type="ChEBI" id="CHEBI:15378"/>
        <dbReference type="ChEBI" id="CHEBI:57540"/>
        <dbReference type="ChEBI" id="CHEBI:57597"/>
        <dbReference type="ChEBI" id="CHEBI:57642"/>
        <dbReference type="ChEBI" id="CHEBI:57945"/>
        <dbReference type="EC" id="1.1.1.94"/>
    </reaction>
    <physiologicalReaction direction="right-to-left" evidence="1">
        <dbReference type="Rhea" id="RHEA:11094"/>
    </physiologicalReaction>
</comment>
<comment type="catalytic activity">
    <reaction evidence="1">
        <text>sn-glycerol 3-phosphate + NADP(+) = dihydroxyacetone phosphate + NADPH + H(+)</text>
        <dbReference type="Rhea" id="RHEA:11096"/>
        <dbReference type="ChEBI" id="CHEBI:15378"/>
        <dbReference type="ChEBI" id="CHEBI:57597"/>
        <dbReference type="ChEBI" id="CHEBI:57642"/>
        <dbReference type="ChEBI" id="CHEBI:57783"/>
        <dbReference type="ChEBI" id="CHEBI:58349"/>
        <dbReference type="EC" id="1.1.1.94"/>
    </reaction>
    <physiologicalReaction direction="right-to-left" evidence="1">
        <dbReference type="Rhea" id="RHEA:11098"/>
    </physiologicalReaction>
</comment>
<comment type="pathway">
    <text evidence="1">Membrane lipid metabolism; glycerophospholipid metabolism.</text>
</comment>
<comment type="subcellular location">
    <subcellularLocation>
        <location evidence="1">Cytoplasm</location>
    </subcellularLocation>
</comment>
<comment type="similarity">
    <text evidence="1">Belongs to the NAD-dependent glycerol-3-phosphate dehydrogenase family.</text>
</comment>
<keyword id="KW-0963">Cytoplasm</keyword>
<keyword id="KW-0444">Lipid biosynthesis</keyword>
<keyword id="KW-0443">Lipid metabolism</keyword>
<keyword id="KW-0520">NAD</keyword>
<keyword id="KW-0521">NADP</keyword>
<keyword id="KW-0547">Nucleotide-binding</keyword>
<keyword id="KW-0560">Oxidoreductase</keyword>
<keyword id="KW-0594">Phospholipid biosynthesis</keyword>
<keyword id="KW-1208">Phospholipid metabolism</keyword>
<protein>
    <recommendedName>
        <fullName evidence="1">Glycerol-3-phosphate dehydrogenase [NAD(P)+]</fullName>
        <ecNumber evidence="1">1.1.1.94</ecNumber>
    </recommendedName>
    <alternativeName>
        <fullName evidence="1">NAD(P)(+)-dependent glycerol-3-phosphate dehydrogenase</fullName>
    </alternativeName>
    <alternativeName>
        <fullName evidence="1">NAD(P)H-dependent dihydroxyacetone-phosphate reductase</fullName>
    </alternativeName>
</protein>